<reference key="1">
    <citation type="journal article" date="1996" name="J. Biol. Chem.">
        <title>Cloning and expression of a novel human brain Na+ channel.</title>
        <authorList>
            <person name="Price M.P."/>
            <person name="Snyder P.M."/>
            <person name="Welsh M.J."/>
        </authorList>
    </citation>
    <scope>NUCLEOTIDE SEQUENCE [MRNA] (ISOFORM 1)</scope>
    <scope>FUNCTION</scope>
    <scope>TRANSPORTER ACTIVITY</scope>
    <scope>ACTIVITY REGULATION</scope>
    <scope>SUBUNIT</scope>
    <scope>SUBCELLULAR LOCATION</scope>
    <source>
        <tissue>Brain</tissue>
    </source>
</reference>
<reference key="2">
    <citation type="journal article" date="1996" name="J. Biol. Chem.">
        <title>The mammalian degenerin MDEG, an amiloride-sensitive cation channel activated by mutations causing neurodegeneration in Caenorhabditis elegans.</title>
        <authorList>
            <person name="Waldmann R."/>
            <person name="Champigny G."/>
            <person name="Voilley N."/>
            <person name="Lauritzen I."/>
            <person name="Lazdunski M."/>
        </authorList>
    </citation>
    <scope>NUCLEOTIDE SEQUENCE [MRNA] (ISOFORM 1)</scope>
    <scope>FUNCTION</scope>
    <scope>TRANSPORTER ACTIVITY</scope>
    <scope>ACTIVITY REGULATION</scope>
    <scope>TISSUE SPECIFICITY</scope>
    <scope>MUTAGENESIS OF GLY-430</scope>
    <source>
        <tissue>Brain</tissue>
    </source>
</reference>
<reference key="3">
    <citation type="journal article" date="1997" name="Proc. Natl. Acad. Sci. U.S.A.">
        <title>BNaC1 and BNaC2 constitute a new family of human neuronal sodium channels related to degenerins and epithelial sodium channels.</title>
        <authorList>
            <person name="Garcia-Anoveros J."/>
            <person name="Derfler B.H."/>
            <person name="Neville-Golden J."/>
            <person name="Hyman B.T."/>
            <person name="Corey D.P."/>
        </authorList>
    </citation>
    <scope>NUCLEOTIDE SEQUENCE [MRNA] (ISOFORM 1)</scope>
    <source>
        <tissue>Frontal cortex</tissue>
    </source>
</reference>
<reference key="4">
    <citation type="journal article" date="2007" name="BMC Genomics">
        <title>The full-ORF clone resource of the German cDNA consortium.</title>
        <authorList>
            <person name="Bechtel S."/>
            <person name="Rosenfelder H."/>
            <person name="Duda A."/>
            <person name="Schmidt C.P."/>
            <person name="Ernst U."/>
            <person name="Wellenreuther R."/>
            <person name="Mehrle A."/>
            <person name="Schuster C."/>
            <person name="Bahr A."/>
            <person name="Bloecker H."/>
            <person name="Heubner D."/>
            <person name="Hoerlein A."/>
            <person name="Michel G."/>
            <person name="Wedler H."/>
            <person name="Koehrer K."/>
            <person name="Ottenwaelder B."/>
            <person name="Poustka A."/>
            <person name="Wiemann S."/>
            <person name="Schupp I."/>
        </authorList>
    </citation>
    <scope>NUCLEOTIDE SEQUENCE [LARGE SCALE MRNA] (ISOFORM 2)</scope>
    <source>
        <tissue>Amygdala</tissue>
    </source>
</reference>
<reference key="5">
    <citation type="journal article" date="2006" name="Nature">
        <title>DNA sequence of human chromosome 17 and analysis of rearrangement in the human lineage.</title>
        <authorList>
            <person name="Zody M.C."/>
            <person name="Garber M."/>
            <person name="Adams D.J."/>
            <person name="Sharpe T."/>
            <person name="Harrow J."/>
            <person name="Lupski J.R."/>
            <person name="Nicholson C."/>
            <person name="Searle S.M."/>
            <person name="Wilming L."/>
            <person name="Young S.K."/>
            <person name="Abouelleil A."/>
            <person name="Allen N.R."/>
            <person name="Bi W."/>
            <person name="Bloom T."/>
            <person name="Borowsky M.L."/>
            <person name="Bugalter B.E."/>
            <person name="Butler J."/>
            <person name="Chang J.L."/>
            <person name="Chen C.-K."/>
            <person name="Cook A."/>
            <person name="Corum B."/>
            <person name="Cuomo C.A."/>
            <person name="de Jong P.J."/>
            <person name="DeCaprio D."/>
            <person name="Dewar K."/>
            <person name="FitzGerald M."/>
            <person name="Gilbert J."/>
            <person name="Gibson R."/>
            <person name="Gnerre S."/>
            <person name="Goldstein S."/>
            <person name="Grafham D.V."/>
            <person name="Grocock R."/>
            <person name="Hafez N."/>
            <person name="Hagopian D.S."/>
            <person name="Hart E."/>
            <person name="Norman C.H."/>
            <person name="Humphray S."/>
            <person name="Jaffe D.B."/>
            <person name="Jones M."/>
            <person name="Kamal M."/>
            <person name="Khodiyar V.K."/>
            <person name="LaButti K."/>
            <person name="Laird G."/>
            <person name="Lehoczky J."/>
            <person name="Liu X."/>
            <person name="Lokyitsang T."/>
            <person name="Loveland J."/>
            <person name="Lui A."/>
            <person name="Macdonald P."/>
            <person name="Major J.E."/>
            <person name="Matthews L."/>
            <person name="Mauceli E."/>
            <person name="McCarroll S.A."/>
            <person name="Mihalev A.H."/>
            <person name="Mudge J."/>
            <person name="Nguyen C."/>
            <person name="Nicol R."/>
            <person name="O'Leary S.B."/>
            <person name="Osoegawa K."/>
            <person name="Schwartz D.C."/>
            <person name="Shaw-Smith C."/>
            <person name="Stankiewicz P."/>
            <person name="Steward C."/>
            <person name="Swarbreck D."/>
            <person name="Venkataraman V."/>
            <person name="Whittaker C.A."/>
            <person name="Yang X."/>
            <person name="Zimmer A.R."/>
            <person name="Bradley A."/>
            <person name="Hubbard T."/>
            <person name="Birren B.W."/>
            <person name="Rogers J."/>
            <person name="Lander E.S."/>
            <person name="Nusbaum C."/>
        </authorList>
    </citation>
    <scope>NUCLEOTIDE SEQUENCE [LARGE SCALE GENOMIC DNA]</scope>
</reference>
<reference key="6">
    <citation type="journal article" date="2004" name="Genome Res.">
        <title>The status, quality, and expansion of the NIH full-length cDNA project: the Mammalian Gene Collection (MGC).</title>
        <authorList>
            <consortium name="The MGC Project Team"/>
        </authorList>
    </citation>
    <scope>NUCLEOTIDE SEQUENCE [LARGE SCALE MRNA] (ISOFORM 1)</scope>
    <source>
        <tissue>Brain</tissue>
    </source>
</reference>
<reference key="7">
    <citation type="journal article" date="2000" name="J. Biol. Chem.">
        <title>Mammalian ASIC2a and ASIC3 subunits co-assemble into heteromeric proton-gated channels sensitive to Gd3+.</title>
        <authorList>
            <person name="Babinski K."/>
            <person name="Catarsi S."/>
            <person name="Biagini G."/>
            <person name="Seguela P."/>
        </authorList>
    </citation>
    <scope>FUNCTION</scope>
    <scope>TRANSPORTER ACTIVITY</scope>
    <scope>ACTIVITY REGULATION</scope>
    <scope>SUBUNIT</scope>
    <scope>SUBCELLULAR LOCATION</scope>
    <scope>TISSUE SPECIFICITY</scope>
</reference>
<reference key="8">
    <citation type="journal article" date="2002" name="Biochem. J.">
        <title>Interaction of the synaptic protein PICK1 (protein interacting with C kinase 1) with the non-voltage gated sodium channels BNC1 (brain Na+ channel 1) and ASIC (acid-sensing ion channel).</title>
        <authorList>
            <person name="Hruska-Hageman A.M."/>
            <person name="Wemmie J.A."/>
            <person name="Price M.P."/>
            <person name="Welsh M.J."/>
        </authorList>
    </citation>
    <scope>INTERACTION WITH PICK1</scope>
</reference>
<reference key="9">
    <citation type="journal article" date="2012" name="Nature">
        <title>Black mamba venom peptides target acid-sensing ion channels to abolish pain.</title>
        <authorList>
            <person name="Diochot S."/>
            <person name="Baron A."/>
            <person name="Salinas M."/>
            <person name="Douguet D."/>
            <person name="Scarzello S."/>
            <person name="Dabert-Gay A.-S."/>
            <person name="Debayle D."/>
            <person name="Friend V."/>
            <person name="Alloui A."/>
            <person name="Lazdunski M."/>
            <person name="Lingueglia E."/>
        </authorList>
    </citation>
    <scope>FUNCTION</scope>
    <scope>ACTIVITY REGULATION BY MAMBALGIN-1</scope>
</reference>
<reference evidence="20" key="10">
    <citation type="submission" date="2019-10" db="PDB data bank">
        <title>hASIC2a co-crystallized with Mamb-1.</title>
        <authorList>
            <person name="Lei F."/>
            <person name="Jian S."/>
        </authorList>
    </citation>
    <scope>X-RAY CRYSTALLOGRAPHY (3.08 ANGSTROMS) OF 13-461</scope>
    <scope>SUBUNIT</scope>
    <scope>DISULFIDE BOND</scope>
    <scope>TOPOLOGY</scope>
</reference>
<proteinExistence type="evidence at protein level"/>
<accession>Q16515</accession>
<accession>E9PBX2</accession>
<accession>Q13553</accession>
<accession>Q6DJU1</accession>
<accession>Q8N3E2</accession>
<gene>
    <name evidence="19" type="primary">ASIC2</name>
    <name evidence="19" type="synonym">ACCN</name>
    <name evidence="19" type="synonym">ACCN1</name>
</gene>
<dbReference type="EMBL" id="U50352">
    <property type="protein sequence ID" value="AAC50432.1"/>
    <property type="molecule type" value="mRNA"/>
</dbReference>
<dbReference type="EMBL" id="U53212">
    <property type="protein sequence ID" value="AAC50498.1"/>
    <property type="molecule type" value="mRNA"/>
</dbReference>
<dbReference type="EMBL" id="U57352">
    <property type="protein sequence ID" value="AAB49182.1"/>
    <property type="molecule type" value="mRNA"/>
</dbReference>
<dbReference type="EMBL" id="AL834182">
    <property type="protein sequence ID" value="CAD38879.1"/>
    <property type="molecule type" value="mRNA"/>
</dbReference>
<dbReference type="EMBL" id="AC003687">
    <property type="status" value="NOT_ANNOTATED_CDS"/>
    <property type="molecule type" value="Genomic_DNA"/>
</dbReference>
<dbReference type="EMBL" id="AC004147">
    <property type="status" value="NOT_ANNOTATED_CDS"/>
    <property type="molecule type" value="Genomic_DNA"/>
</dbReference>
<dbReference type="EMBL" id="AC005549">
    <property type="status" value="NOT_ANNOTATED_CDS"/>
    <property type="molecule type" value="Genomic_DNA"/>
</dbReference>
<dbReference type="EMBL" id="AC008133">
    <property type="status" value="NOT_ANNOTATED_CDS"/>
    <property type="molecule type" value="Genomic_DNA"/>
</dbReference>
<dbReference type="EMBL" id="AC011824">
    <property type="status" value="NOT_ANNOTATED_CDS"/>
    <property type="molecule type" value="Genomic_DNA"/>
</dbReference>
<dbReference type="EMBL" id="AC015751">
    <property type="status" value="NOT_ANNOTATED_CDS"/>
    <property type="molecule type" value="Genomic_DNA"/>
</dbReference>
<dbReference type="EMBL" id="AC024610">
    <property type="status" value="NOT_ANNOTATED_CDS"/>
    <property type="molecule type" value="Genomic_DNA"/>
</dbReference>
<dbReference type="EMBL" id="AC024614">
    <property type="status" value="NOT_ANNOTATED_CDS"/>
    <property type="molecule type" value="Genomic_DNA"/>
</dbReference>
<dbReference type="EMBL" id="AC025898">
    <property type="status" value="NOT_ANNOTATED_CDS"/>
    <property type="molecule type" value="Genomic_DNA"/>
</dbReference>
<dbReference type="EMBL" id="AC027233">
    <property type="status" value="NOT_ANNOTATED_CDS"/>
    <property type="molecule type" value="Genomic_DNA"/>
</dbReference>
<dbReference type="EMBL" id="AC078907">
    <property type="status" value="NOT_ANNOTATED_CDS"/>
    <property type="molecule type" value="Genomic_DNA"/>
</dbReference>
<dbReference type="EMBL" id="AC123769">
    <property type="status" value="NOT_ANNOTATED_CDS"/>
    <property type="molecule type" value="Genomic_DNA"/>
</dbReference>
<dbReference type="EMBL" id="BC075042">
    <property type="protein sequence ID" value="AAH75042.1"/>
    <property type="molecule type" value="mRNA"/>
</dbReference>
<dbReference type="EMBL" id="BC075043">
    <property type="protein sequence ID" value="AAH75043.1"/>
    <property type="molecule type" value="mRNA"/>
</dbReference>
<dbReference type="CCDS" id="CCDS11276.1">
    <molecule id="Q16515-2"/>
</dbReference>
<dbReference type="CCDS" id="CCDS42296.1">
    <molecule id="Q16515-1"/>
</dbReference>
<dbReference type="RefSeq" id="NP_001085.2">
    <molecule id="Q16515-1"/>
    <property type="nucleotide sequence ID" value="NM_001094.4"/>
</dbReference>
<dbReference type="RefSeq" id="NP_899233.1">
    <molecule id="Q16515-2"/>
    <property type="nucleotide sequence ID" value="NM_183377.2"/>
</dbReference>
<dbReference type="PDB" id="6L6P">
    <property type="method" value="X-ray"/>
    <property type="resolution" value="3.08 A"/>
    <property type="chains" value="A/B/C=13-461"/>
</dbReference>
<dbReference type="PDBsum" id="6L6P"/>
<dbReference type="SMR" id="Q16515"/>
<dbReference type="BioGRID" id="106558">
    <property type="interactions" value="19"/>
</dbReference>
<dbReference type="FunCoup" id="Q16515">
    <property type="interactions" value="511"/>
</dbReference>
<dbReference type="IntAct" id="Q16515">
    <property type="interactions" value="11"/>
</dbReference>
<dbReference type="MINT" id="Q16515"/>
<dbReference type="STRING" id="9606.ENSP00000225823"/>
<dbReference type="DrugBank" id="DB00594">
    <property type="generic name" value="Amiloride"/>
</dbReference>
<dbReference type="DrugCentral" id="Q16515"/>
<dbReference type="GuidetoPHARMACOLOGY" id="685"/>
<dbReference type="GlyCosmos" id="Q16515">
    <property type="glycosylation" value="2 sites, No reported glycans"/>
</dbReference>
<dbReference type="GlyGen" id="Q16515">
    <property type="glycosylation" value="10 sites"/>
</dbReference>
<dbReference type="iPTMnet" id="Q16515"/>
<dbReference type="PhosphoSitePlus" id="Q16515"/>
<dbReference type="BioMuta" id="ASIC2"/>
<dbReference type="DMDM" id="2500840"/>
<dbReference type="jPOST" id="Q16515"/>
<dbReference type="MassIVE" id="Q16515"/>
<dbReference type="PeptideAtlas" id="Q16515"/>
<dbReference type="ProteomicsDB" id="19311"/>
<dbReference type="ProteomicsDB" id="60887">
    <molecule id="Q16515-1"/>
</dbReference>
<dbReference type="ProteomicsDB" id="60888">
    <molecule id="Q16515-2"/>
</dbReference>
<dbReference type="Antibodypedia" id="15465">
    <property type="antibodies" value="222 antibodies from 32 providers"/>
</dbReference>
<dbReference type="DNASU" id="40"/>
<dbReference type="Ensembl" id="ENST00000225823.7">
    <molecule id="Q16515-2"/>
    <property type="protein sequence ID" value="ENSP00000225823.2"/>
    <property type="gene ID" value="ENSG00000108684.15"/>
</dbReference>
<dbReference type="Ensembl" id="ENST00000359872.6">
    <molecule id="Q16515-1"/>
    <property type="protein sequence ID" value="ENSP00000352934.6"/>
    <property type="gene ID" value="ENSG00000108684.15"/>
</dbReference>
<dbReference type="GeneID" id="40"/>
<dbReference type="KEGG" id="hsa:40"/>
<dbReference type="MANE-Select" id="ENST00000225823.7">
    <molecule id="Q16515-2"/>
    <property type="protein sequence ID" value="ENSP00000225823.2"/>
    <property type="RefSeq nucleotide sequence ID" value="NM_183377.2"/>
    <property type="RefSeq protein sequence ID" value="NP_899233.1"/>
</dbReference>
<dbReference type="UCSC" id="uc002hht.4">
    <molecule id="Q16515-1"/>
    <property type="organism name" value="human"/>
</dbReference>
<dbReference type="AGR" id="HGNC:99"/>
<dbReference type="CTD" id="40"/>
<dbReference type="DisGeNET" id="40"/>
<dbReference type="GeneCards" id="ASIC2"/>
<dbReference type="HGNC" id="HGNC:99">
    <property type="gene designation" value="ASIC2"/>
</dbReference>
<dbReference type="HPA" id="ENSG00000108684">
    <property type="expression patterns" value="Group enriched (brain, cervix, endometrium, retina)"/>
</dbReference>
<dbReference type="MIM" id="601784">
    <property type="type" value="gene"/>
</dbReference>
<dbReference type="neXtProt" id="NX_Q16515"/>
<dbReference type="OpenTargets" id="ENSG00000108684"/>
<dbReference type="PharmGKB" id="PA24433"/>
<dbReference type="VEuPathDB" id="HostDB:ENSG00000108684"/>
<dbReference type="GeneTree" id="ENSGT00940000154991"/>
<dbReference type="HOGENOM" id="CLU_020415_1_2_1"/>
<dbReference type="InParanoid" id="Q16515"/>
<dbReference type="OMA" id="QGHCLRR"/>
<dbReference type="OrthoDB" id="5874059at2759"/>
<dbReference type="PAN-GO" id="Q16515">
    <property type="GO annotations" value="3 GO annotations based on evolutionary models"/>
</dbReference>
<dbReference type="PhylomeDB" id="Q16515"/>
<dbReference type="TreeFam" id="TF330663"/>
<dbReference type="PathwayCommons" id="Q16515"/>
<dbReference type="Reactome" id="R-HSA-2672351">
    <property type="pathway name" value="Stimuli-sensing channels"/>
</dbReference>
<dbReference type="SignaLink" id="Q16515"/>
<dbReference type="BioGRID-ORCS" id="40">
    <property type="hits" value="10 hits in 1140 CRISPR screens"/>
</dbReference>
<dbReference type="ChiTaRS" id="ASIC2">
    <property type="organism name" value="human"/>
</dbReference>
<dbReference type="GeneWiki" id="ACCN1"/>
<dbReference type="GenomeRNAi" id="40"/>
<dbReference type="Pharos" id="Q16515">
    <property type="development level" value="Tchem"/>
</dbReference>
<dbReference type="PRO" id="PR:Q16515"/>
<dbReference type="Proteomes" id="UP000005640">
    <property type="component" value="Chromosome 17"/>
</dbReference>
<dbReference type="RNAct" id="Q16515">
    <property type="molecule type" value="protein"/>
</dbReference>
<dbReference type="Bgee" id="ENSG00000108684">
    <property type="expression patterns" value="Expressed in prefrontal cortex and 99 other cell types or tissues"/>
</dbReference>
<dbReference type="GO" id="GO:0043197">
    <property type="term" value="C:dendritic spine"/>
    <property type="evidence" value="ECO:0007669"/>
    <property type="project" value="Ensembl"/>
</dbReference>
<dbReference type="GO" id="GO:0043025">
    <property type="term" value="C:neuronal cell body"/>
    <property type="evidence" value="ECO:0007669"/>
    <property type="project" value="Ensembl"/>
</dbReference>
<dbReference type="GO" id="GO:0005886">
    <property type="term" value="C:plasma membrane"/>
    <property type="evidence" value="ECO:0000314"/>
    <property type="project" value="UniProtKB"/>
</dbReference>
<dbReference type="GO" id="GO:0098839">
    <property type="term" value="C:postsynaptic density membrane"/>
    <property type="evidence" value="ECO:0007669"/>
    <property type="project" value="Ensembl"/>
</dbReference>
<dbReference type="GO" id="GO:0015280">
    <property type="term" value="F:ligand-gated sodium channel activity"/>
    <property type="evidence" value="ECO:0000318"/>
    <property type="project" value="GO_Central"/>
</dbReference>
<dbReference type="GO" id="GO:0022839">
    <property type="term" value="F:monoatomic ion-gated channel activity"/>
    <property type="evidence" value="ECO:0007669"/>
    <property type="project" value="Ensembl"/>
</dbReference>
<dbReference type="GO" id="GO:0160125">
    <property type="term" value="F:pH-gated sodium channel activity"/>
    <property type="evidence" value="ECO:0000314"/>
    <property type="project" value="UniProtKB"/>
</dbReference>
<dbReference type="GO" id="GO:0005248">
    <property type="term" value="F:voltage-gated sodium channel activity"/>
    <property type="evidence" value="ECO:0007669"/>
    <property type="project" value="Ensembl"/>
</dbReference>
<dbReference type="GO" id="GO:0071468">
    <property type="term" value="P:cellular response to acidic pH"/>
    <property type="evidence" value="ECO:0007669"/>
    <property type="project" value="Ensembl"/>
</dbReference>
<dbReference type="GO" id="GO:0071466">
    <property type="term" value="P:cellular response to xenobiotic stimulus"/>
    <property type="evidence" value="ECO:0007669"/>
    <property type="project" value="Ensembl"/>
</dbReference>
<dbReference type="GO" id="GO:0050974">
    <property type="term" value="P:detection of mechanical stimulus involved in sensory perception"/>
    <property type="evidence" value="ECO:0007669"/>
    <property type="project" value="Ensembl"/>
</dbReference>
<dbReference type="GO" id="GO:0051649">
    <property type="term" value="P:establishment of localization in cell"/>
    <property type="evidence" value="ECO:0007669"/>
    <property type="project" value="Ensembl"/>
</dbReference>
<dbReference type="GO" id="GO:0043066">
    <property type="term" value="P:negative regulation of apoptotic process"/>
    <property type="evidence" value="ECO:0007669"/>
    <property type="project" value="Ensembl"/>
</dbReference>
<dbReference type="GO" id="GO:0007602">
    <property type="term" value="P:phototransduction"/>
    <property type="evidence" value="ECO:0007669"/>
    <property type="project" value="Ensembl"/>
</dbReference>
<dbReference type="GO" id="GO:0051965">
    <property type="term" value="P:positive regulation of synapse assembly"/>
    <property type="evidence" value="ECO:0007669"/>
    <property type="project" value="Ensembl"/>
</dbReference>
<dbReference type="GO" id="GO:0035418">
    <property type="term" value="P:protein localization to synapse"/>
    <property type="evidence" value="ECO:0007669"/>
    <property type="project" value="Ensembl"/>
</dbReference>
<dbReference type="GO" id="GO:0042391">
    <property type="term" value="P:regulation of membrane potential"/>
    <property type="evidence" value="ECO:0007669"/>
    <property type="project" value="Ensembl"/>
</dbReference>
<dbReference type="GO" id="GO:0034765">
    <property type="term" value="P:regulation of monoatomic ion transmembrane transport"/>
    <property type="evidence" value="ECO:0007669"/>
    <property type="project" value="Ensembl"/>
</dbReference>
<dbReference type="GO" id="GO:0150052">
    <property type="term" value="P:regulation of postsynapse assembly"/>
    <property type="evidence" value="ECO:0007669"/>
    <property type="project" value="Ensembl"/>
</dbReference>
<dbReference type="GO" id="GO:0003026">
    <property type="term" value="P:regulation of systemic arterial blood pressure by aortic arch baroreceptor feedback"/>
    <property type="evidence" value="ECO:0007669"/>
    <property type="project" value="Ensembl"/>
</dbReference>
<dbReference type="GO" id="GO:0019229">
    <property type="term" value="P:regulation of vasoconstriction"/>
    <property type="evidence" value="ECO:0007669"/>
    <property type="project" value="Ensembl"/>
</dbReference>
<dbReference type="GO" id="GO:0007605">
    <property type="term" value="P:sensory perception of sound"/>
    <property type="evidence" value="ECO:0007669"/>
    <property type="project" value="Ensembl"/>
</dbReference>
<dbReference type="GO" id="GO:0050915">
    <property type="term" value="P:sensory perception of sour taste"/>
    <property type="evidence" value="ECO:0000315"/>
    <property type="project" value="UniProtKB"/>
</dbReference>
<dbReference type="GO" id="GO:0035725">
    <property type="term" value="P:sodium ion transmembrane transport"/>
    <property type="evidence" value="ECO:0000318"/>
    <property type="project" value="GO_Central"/>
</dbReference>
<dbReference type="GO" id="GO:0007416">
    <property type="term" value="P:synapse assembly"/>
    <property type="evidence" value="ECO:0007669"/>
    <property type="project" value="Ensembl"/>
</dbReference>
<dbReference type="FunFam" id="1.10.287.820:FF:000001">
    <property type="entry name" value="acid-sensing ion channel 1 isoform X2"/>
    <property type="match status" value="1"/>
</dbReference>
<dbReference type="FunFam" id="1.10.3590.10:FF:000001">
    <property type="entry name" value="acid-sensing ion channel 1 isoform X2"/>
    <property type="match status" value="1"/>
</dbReference>
<dbReference type="FunFam" id="1.10.3590.10:FF:000002">
    <property type="entry name" value="acid-sensing ion channel 1 isoform X2"/>
    <property type="match status" value="1"/>
</dbReference>
<dbReference type="FunFam" id="1.10.287.770:FF:000006">
    <property type="entry name" value="acid-sensing ion channel 2"/>
    <property type="match status" value="1"/>
</dbReference>
<dbReference type="FunFam" id="1.10.287.770:FF:000001">
    <property type="entry name" value="Acid-sensing ion channel subunit 1"/>
    <property type="match status" value="1"/>
</dbReference>
<dbReference type="Gene3D" id="1.10.3590.10">
    <property type="entry name" value="acid-sensing ion channel 1 domain"/>
    <property type="match status" value="2"/>
</dbReference>
<dbReference type="Gene3D" id="1.10.287.820">
    <property type="entry name" value="Acid-sensing ion channel domain"/>
    <property type="match status" value="1"/>
</dbReference>
<dbReference type="Gene3D" id="1.10.287.770">
    <property type="entry name" value="YojJ-like"/>
    <property type="match status" value="2"/>
</dbReference>
<dbReference type="InterPro" id="IPR001873">
    <property type="entry name" value="ENaC"/>
</dbReference>
<dbReference type="InterPro" id="IPR004724">
    <property type="entry name" value="ENaC_chordates"/>
</dbReference>
<dbReference type="InterPro" id="IPR020903">
    <property type="entry name" value="ENaC_CS"/>
</dbReference>
<dbReference type="NCBIfam" id="TIGR00859">
    <property type="entry name" value="ENaC"/>
    <property type="match status" value="1"/>
</dbReference>
<dbReference type="PANTHER" id="PTHR11690:SF128">
    <property type="entry name" value="ACID-SENSING ION CHANNEL 2"/>
    <property type="match status" value="1"/>
</dbReference>
<dbReference type="PANTHER" id="PTHR11690">
    <property type="entry name" value="AMILORIDE-SENSITIVE SODIUM CHANNEL-RELATED"/>
    <property type="match status" value="1"/>
</dbReference>
<dbReference type="Pfam" id="PF00858">
    <property type="entry name" value="ASC"/>
    <property type="match status" value="1"/>
</dbReference>
<dbReference type="PRINTS" id="PR01078">
    <property type="entry name" value="AMINACHANNEL"/>
</dbReference>
<dbReference type="PROSITE" id="PS01206">
    <property type="entry name" value="ASC"/>
    <property type="match status" value="1"/>
</dbReference>
<keyword id="KW-0002">3D-structure</keyword>
<keyword id="KW-0025">Alternative splicing</keyword>
<keyword id="KW-1003">Cell membrane</keyword>
<keyword id="KW-1015">Disulfide bond</keyword>
<keyword id="KW-0325">Glycoprotein</keyword>
<keyword id="KW-0407">Ion channel</keyword>
<keyword id="KW-0406">Ion transport</keyword>
<keyword id="KW-0472">Membrane</keyword>
<keyword id="KW-0597">Phosphoprotein</keyword>
<keyword id="KW-1267">Proteomics identification</keyword>
<keyword id="KW-1185">Reference proteome</keyword>
<keyword id="KW-0915">Sodium</keyword>
<keyword id="KW-0894">Sodium channel</keyword>
<keyword id="KW-0739">Sodium transport</keyword>
<keyword id="KW-0812">Transmembrane</keyword>
<keyword id="KW-1133">Transmembrane helix</keyword>
<keyword id="KW-0813">Transport</keyword>
<evidence type="ECO:0000250" key="1">
    <source>
        <dbReference type="UniProtKB" id="P78348"/>
    </source>
</evidence>
<evidence type="ECO:0000250" key="2">
    <source>
        <dbReference type="UniProtKB" id="Q62962"/>
    </source>
</evidence>
<evidence type="ECO:0000250" key="3">
    <source>
        <dbReference type="UniProtKB" id="Q925H0"/>
    </source>
</evidence>
<evidence type="ECO:0000255" key="4"/>
<evidence type="ECO:0000269" key="5">
    <source>
    </source>
</evidence>
<evidence type="ECO:0000269" key="6">
    <source>
    </source>
</evidence>
<evidence type="ECO:0000269" key="7">
    <source>
    </source>
</evidence>
<evidence type="ECO:0000269" key="8">
    <source>
    </source>
</evidence>
<evidence type="ECO:0000269" key="9">
    <source>
    </source>
</evidence>
<evidence type="ECO:0000269" key="10">
    <source ref="10"/>
</evidence>
<evidence type="ECO:0000303" key="11">
    <source>
    </source>
</evidence>
<evidence type="ECO:0000303" key="12">
    <source>
    </source>
</evidence>
<evidence type="ECO:0000303" key="13">
    <source>
    </source>
</evidence>
<evidence type="ECO:0000303" key="14">
    <source>
    </source>
</evidence>
<evidence type="ECO:0000303" key="15">
    <source>
    </source>
</evidence>
<evidence type="ECO:0000303" key="16">
    <source>
    </source>
</evidence>
<evidence type="ECO:0000305" key="17"/>
<evidence type="ECO:0000305" key="18">
    <source ref="10"/>
</evidence>
<evidence type="ECO:0000312" key="19">
    <source>
        <dbReference type="HGNC" id="HGNC:99"/>
    </source>
</evidence>
<evidence type="ECO:0007744" key="20">
    <source>
        <dbReference type="PDB" id="6L6P"/>
    </source>
</evidence>
<evidence type="ECO:0007829" key="21">
    <source>
        <dbReference type="PDB" id="6L6P"/>
    </source>
</evidence>
<comment type="function">
    <text evidence="3 5 7 8 9">Forms pH-gated trimeric sodium channels that act as postsynaptic excitatory sensors in the nervous system (PubMed:10842183, PubMed:23034652, PubMed:8626462, PubMed:8631835). Upon extracellular acidification, these channels generate rapid, transient inward currents that fully desensitize (PubMed:10842183). Highly selective for sodium, they are permeable to other cations (PubMed:8626462, PubMed:8631835). By forming heterotrimeric channels with ASIC1, could contribute to synaptic plasticity, learning, and memory. Additionally, as acid sensors at nerve terminals, plays a role in mechanosensation and phototransduction (By similarity).</text>
</comment>
<comment type="catalytic activity">
    <reaction evidence="5 8 9">
        <text>Na(+)(in) = Na(+)(out)</text>
        <dbReference type="Rhea" id="RHEA:34963"/>
        <dbReference type="ChEBI" id="CHEBI:29101"/>
    </reaction>
</comment>
<comment type="catalytic activity">
    <reaction evidence="8">
        <text>K(+)(in) = K(+)(out)</text>
        <dbReference type="Rhea" id="RHEA:29463"/>
        <dbReference type="ChEBI" id="CHEBI:29103"/>
    </reaction>
</comment>
<comment type="catalytic activity">
    <reaction evidence="2">
        <text>Li(+)(in) = Li(+)(out)</text>
        <dbReference type="Rhea" id="RHEA:78551"/>
        <dbReference type="ChEBI" id="CHEBI:49713"/>
    </reaction>
</comment>
<comment type="activity regulation">
    <text evidence="5 7 8 9">Inhibited by the diuretic drug amiloride (PubMed:10842183, PubMed:8626462, PubMed:8631835). Inhibited by gadolinium ions, the heterotrimer with ASIC3 being more sensitive (PubMed:10842183). Heterotrimer composed of ASIC1 and ASIC2 are inhibited by the snake venom mambalgin-1 (PubMed:23034652).</text>
</comment>
<comment type="subunit">
    <text evidence="3 5 6 18">Can form homotrimers (Probable). Heterotrimer; forms functional heterotrimers producing channel with different properties (PubMed:10842183). Forms heterotrimers with ASIC1; while ASIC1 determines current amplitude, ASIC2 influences the properties of the current (By similarity). Forms heterotrimers with ASIC3; resulting in channels with distinct properties (PubMed:10842183). Interacts with STOM; STOM regulates the gating of ASIC2-containing channels (By similarity). Interacts with PICK1; promotes ASIC3 phosphorylation by PKC and activation of ASIC2/ASIC3 heterotrimers (PubMed:11802773).</text>
</comment>
<comment type="interaction">
    <interactant intactId="EBI-79149">
        <id>Q16515</id>
    </interactant>
    <interactant intactId="EBI-79165">
        <id>Q9NRD5</id>
        <label>PICK1</label>
    </interactant>
    <organismsDiffer>false</organismsDiffer>
    <experiments>3</experiments>
</comment>
<comment type="subcellular location">
    <subcellularLocation>
        <location evidence="5 8">Cell membrane</location>
        <topology evidence="10">Multi-pass membrane protein</topology>
    </subcellularLocation>
    <text evidence="3">Localized at the plasma membrane of neurons, in the soma and punctated peripheral processes.</text>
</comment>
<comment type="alternative products">
    <event type="alternative splicing"/>
    <isoform>
        <id>Q16515-1</id>
        <name>1</name>
        <name evidence="11">Asic2a</name>
        <name evidence="12">MDEG1</name>
        <sequence type="displayed"/>
    </isoform>
    <isoform>
        <id>Q16515-2</id>
        <name>2</name>
        <name evidence="12">Asic2b</name>
        <name evidence="12">MDEG2</name>
        <sequence type="described" ref="VSP_015590 VSP_015591"/>
    </isoform>
</comment>
<comment type="tissue specificity">
    <text evidence="5 9">Expressed in brain, cerebellum, trigeminal sensory ganglia and also detected in testis.</text>
</comment>
<comment type="similarity">
    <text evidence="17">Belongs to the amiloride-sensitive sodium channel (TC 1.A.6) family. ASIC2 subfamily.</text>
</comment>
<name>ASIC2_HUMAN</name>
<sequence>MDLKESPSEGSLQPSSIQIFANTSTLHGIRHIFVYGPLTIRRVLWAVAFVGSLGLLLVESSERVSYYFSYQHVTKVDEVVAQSLVFPAVTLCNLNGFRFSRLTTNDLYHAGELLALLDVNLQIPDPHLADPSVLEALRQKANFKHYKPKQFSMLEFLHRVGHDLKDMMLYCKFKGQECGHQDFTTVFTKYGKCYMFNSGEDGKPLLTTVKGGTGNGLEIMLDIQQDEYLPIWGETEETTFEAGVKVQIHSQSEPPFIQELGFGVAPGFQTFVATQEQRLTYLPPPWGECRSSEMGLDFFPVYSITACRIDCETRYIVENCNCRMVHMPGDAPFCTPEQHKECAEPALGLLAEKDSNYCLCRTPCNLTRYNKELSMVKIPSKTSAKYLEKKFNKSEKYISENILVLDIFFEALNYETIEQKKAYEVAALLGDIGGQMGLFIGASILTILELFDYIYELIKEKLLDLLGKEEDEGSHDENVSTCDTMPNHSETISHTVNVPLQTTLGTLEEIAC</sequence>
<feature type="chain" id="PRO_0000181290" description="Acid-sensing ion channel 2">
    <location>
        <begin position="1"/>
        <end position="512"/>
    </location>
</feature>
<feature type="topological domain" description="Cytoplasmic" evidence="18">
    <location>
        <begin position="1"/>
        <end position="42"/>
    </location>
</feature>
<feature type="transmembrane region" description="Helical" evidence="18 20">
    <location>
        <begin position="43"/>
        <end position="64"/>
    </location>
</feature>
<feature type="topological domain" description="Extracellular" evidence="18">
    <location>
        <begin position="65"/>
        <end position="424"/>
    </location>
</feature>
<feature type="transmembrane region" description="Helical" evidence="18 20">
    <location>
        <begin position="425"/>
        <end position="439"/>
    </location>
</feature>
<feature type="topological domain" description="Cytoplasmic" evidence="18">
    <location>
        <begin position="440"/>
        <end position="512"/>
    </location>
</feature>
<feature type="short sequence motif" description="GAS motif; ion selectivity filter" evidence="1">
    <location>
        <begin position="441"/>
        <end position="443"/>
    </location>
</feature>
<feature type="modified residue" description="Phosphoserine" evidence="2">
    <location>
        <position position="8"/>
    </location>
</feature>
<feature type="modified residue" description="Phosphoserine" evidence="2">
    <location>
        <position position="11"/>
    </location>
</feature>
<feature type="glycosylation site" description="N-linked (GlcNAc...) asparagine" evidence="4">
    <location>
        <position position="365"/>
    </location>
</feature>
<feature type="glycosylation site" description="N-linked (GlcNAc...) asparagine" evidence="4">
    <location>
        <position position="392"/>
    </location>
</feature>
<feature type="disulfide bond" evidence="10 20">
    <location>
        <begin position="92"/>
        <end position="193"/>
    </location>
</feature>
<feature type="disulfide bond" evidence="10 20">
    <location>
        <begin position="289"/>
        <end position="364"/>
    </location>
</feature>
<feature type="disulfide bond" evidence="10 20">
    <location>
        <begin position="307"/>
        <end position="360"/>
    </location>
</feature>
<feature type="disulfide bond" evidence="10 20">
    <location>
        <begin position="311"/>
        <end position="358"/>
    </location>
</feature>
<feature type="disulfide bond" evidence="10 20">
    <location>
        <begin position="320"/>
        <end position="342"/>
    </location>
</feature>
<feature type="disulfide bond" evidence="10 20">
    <location>
        <begin position="322"/>
        <end position="334"/>
    </location>
</feature>
<feature type="splice variant" id="VSP_015590" description="In isoform 2." evidence="13">
    <location>
        <begin position="1"/>
        <end position="184"/>
    </location>
</feature>
<feature type="splice variant" id="VSP_015591" description="In isoform 2." evidence="13">
    <original>T</original>
    <variation>MSRIGGAGLPAAALTGPGRFRMAREEPAPAALAAAGQPGGGRGGERALQGPGVARRGRPSLSRAKLHGLRHMCAGRTAAGGSFQRRALWVLAFCTSFGLLLSWSSNRLLYWLSFPSHTRVHREWSRQLPFPAVTVCNNNPLRFPRLSKGDLYYAGHWLGLLLPNRTARPLVSELLRGDEPRRQWFRKLADFRLFLPPRHFEGISAAFMDRLGHQLEDMLLSCKYRGELCGPHNFSS</variation>
    <location>
        <position position="185"/>
    </location>
</feature>
<feature type="sequence variant" id="VAR_052036" description="In dbSNP:rs16967895.">
    <original>D</original>
    <variation>G</variation>
    <location>
        <position position="354"/>
    </location>
</feature>
<feature type="mutagenesis site" description="No effect on cation channel activity." evidence="9">
    <original>G</original>
    <variation>S</variation>
    <location>
        <position position="430"/>
    </location>
</feature>
<feature type="mutagenesis site" description="Increased cation channel activity; constitutively active." evidence="9">
    <original>G</original>
    <variation>T</variation>
    <variation>V</variation>
    <variation>F</variation>
    <variation>K</variation>
    <location>
        <position position="430"/>
    </location>
</feature>
<feature type="sequence conflict" description="In Ref. 1; AAC50432." evidence="17" ref="1">
    <original>T</original>
    <variation>A</variation>
    <location>
        <position position="495"/>
    </location>
</feature>
<feature type="helix" evidence="21">
    <location>
        <begin position="21"/>
        <end position="24"/>
    </location>
</feature>
<feature type="turn" evidence="21">
    <location>
        <begin position="25"/>
        <end position="27"/>
    </location>
</feature>
<feature type="strand" evidence="21">
    <location>
        <begin position="28"/>
        <end position="30"/>
    </location>
</feature>
<feature type="strand" evidence="21">
    <location>
        <begin position="36"/>
        <end position="38"/>
    </location>
</feature>
<feature type="helix" evidence="21">
    <location>
        <begin position="44"/>
        <end position="68"/>
    </location>
</feature>
<feature type="strand" evidence="21">
    <location>
        <begin position="72"/>
        <end position="80"/>
    </location>
</feature>
<feature type="strand" evidence="21">
    <location>
        <begin position="88"/>
        <end position="94"/>
    </location>
</feature>
<feature type="helix" evidence="21">
    <location>
        <begin position="104"/>
        <end position="110"/>
    </location>
</feature>
<feature type="turn" evidence="21">
    <location>
        <begin position="111"/>
        <end position="115"/>
    </location>
</feature>
<feature type="turn" evidence="21">
    <location>
        <begin position="126"/>
        <end position="128"/>
    </location>
</feature>
<feature type="helix" evidence="21">
    <location>
        <begin position="131"/>
        <end position="140"/>
    </location>
</feature>
<feature type="helix" evidence="21">
    <location>
        <begin position="153"/>
        <end position="160"/>
    </location>
</feature>
<feature type="helix" evidence="21">
    <location>
        <begin position="164"/>
        <end position="167"/>
    </location>
</feature>
<feature type="strand" evidence="21">
    <location>
        <begin position="168"/>
        <end position="173"/>
    </location>
</feature>
<feature type="helix" evidence="21">
    <location>
        <begin position="180"/>
        <end position="182"/>
    </location>
</feature>
<feature type="strand" evidence="21">
    <location>
        <begin position="183"/>
        <end position="188"/>
    </location>
</feature>
<feature type="strand" evidence="21">
    <location>
        <begin position="191"/>
        <end position="196"/>
    </location>
</feature>
<feature type="helix" evidence="21">
    <location>
        <begin position="200"/>
        <end position="202"/>
    </location>
</feature>
<feature type="helix" evidence="21">
    <location>
        <begin position="213"/>
        <end position="215"/>
    </location>
</feature>
<feature type="strand" evidence="21">
    <location>
        <begin position="216"/>
        <end position="222"/>
    </location>
</feature>
<feature type="strand" evidence="21">
    <location>
        <begin position="242"/>
        <end position="249"/>
    </location>
</feature>
<feature type="helix" evidence="21">
    <location>
        <begin position="257"/>
        <end position="260"/>
    </location>
</feature>
<feature type="strand" evidence="21">
    <location>
        <begin position="262"/>
        <end position="264"/>
    </location>
</feature>
<feature type="strand" evidence="21">
    <location>
        <begin position="268"/>
        <end position="280"/>
    </location>
</feature>
<feature type="turn" evidence="21">
    <location>
        <begin position="284"/>
        <end position="286"/>
    </location>
</feature>
<feature type="helix" evidence="21">
    <location>
        <begin position="304"/>
        <end position="320"/>
    </location>
</feature>
<feature type="strand" evidence="21">
    <location>
        <begin position="321"/>
        <end position="323"/>
    </location>
</feature>
<feature type="strand" evidence="21">
    <location>
        <begin position="325"/>
        <end position="327"/>
    </location>
</feature>
<feature type="helix" evidence="21">
    <location>
        <begin position="336"/>
        <end position="341"/>
    </location>
</feature>
<feature type="helix" evidence="21">
    <location>
        <begin position="343"/>
        <end position="352"/>
    </location>
</feature>
<feature type="strand" evidence="21">
    <location>
        <begin position="364"/>
        <end position="379"/>
    </location>
</feature>
<feature type="helix" evidence="21">
    <location>
        <begin position="381"/>
        <end position="391"/>
    </location>
</feature>
<feature type="helix" evidence="21">
    <location>
        <begin position="395"/>
        <end position="401"/>
    </location>
</feature>
<feature type="strand" evidence="21">
    <location>
        <begin position="402"/>
        <end position="422"/>
    </location>
</feature>
<feature type="helix" evidence="21">
    <location>
        <begin position="425"/>
        <end position="439"/>
    </location>
</feature>
<feature type="helix" evidence="21">
    <location>
        <begin position="444"/>
        <end position="456"/>
    </location>
</feature>
<feature type="sequence conflict" description="In Ref. 4; CAD38879." evidence="17" ref="4">
    <original>H</original>
    <variation>R</variation>
    <location sequence="Q16515-2">
        <position position="67"/>
    </location>
</feature>
<organism>
    <name type="scientific">Homo sapiens</name>
    <name type="common">Human</name>
    <dbReference type="NCBI Taxonomy" id="9606"/>
    <lineage>
        <taxon>Eukaryota</taxon>
        <taxon>Metazoa</taxon>
        <taxon>Chordata</taxon>
        <taxon>Craniata</taxon>
        <taxon>Vertebrata</taxon>
        <taxon>Euteleostomi</taxon>
        <taxon>Mammalia</taxon>
        <taxon>Eutheria</taxon>
        <taxon>Euarchontoglires</taxon>
        <taxon>Primates</taxon>
        <taxon>Haplorrhini</taxon>
        <taxon>Catarrhini</taxon>
        <taxon>Hominidae</taxon>
        <taxon>Homo</taxon>
    </lineage>
</organism>
<protein>
    <recommendedName>
        <fullName evidence="11">Acid-sensing ion channel 2</fullName>
        <shortName evidence="11">ASIC2</shortName>
    </recommendedName>
    <alternativeName>
        <fullName evidence="19">Amiloride-sensitive cation channel 1, neuronal</fullName>
    </alternativeName>
    <alternativeName>
        <fullName evidence="19">Amiloride-sensitive cation channel neuronal 1</fullName>
    </alternativeName>
    <alternativeName>
        <fullName evidence="16">Brain sodium channel 1</fullName>
        <shortName evidence="14">BNC1</shortName>
        <shortName evidence="16">BNaC1</shortName>
    </alternativeName>
    <alternativeName>
        <fullName evidence="15">Mammalian degenerin homolog</fullName>
        <shortName evidence="15">MDEG</shortName>
    </alternativeName>
</protein>